<sequence length="347" mass="37914">MSVMFDPEAAIYPFPPKPLPLNLDEKQFYREKIKRMLKERDAVMVAHYYTDPEIQQLAEETGGCISDSLEMARFGAKHSASTLLVAGVRFMGETAKILSPEKTILMPTLNAECSLDLGCPIEEFSAFCDAHPDRTVVVYANTSAAVKARADWVVTSSIAVELIEHLDSLGQKIIWAPDKHLGNYVQKQTGADVLCWQGACIVHDEFKTQALVRMKALYPEAAILVHPESPQSIVDMADAVGSTSQLINAAKTLPQQKLIVATDRGIFYKMQQAVPEKELFEAPTAGEGATCRSCAHCPWMAMNGLKAIADGLESGGAAHEIHVDAALREGALLPLNRMLEFAATLRS</sequence>
<gene>
    <name evidence="1" type="primary">nadA</name>
    <name type="ordered locus">Ent638_1241</name>
</gene>
<proteinExistence type="inferred from homology"/>
<name>NADA_ENT38</name>
<keyword id="KW-0004">4Fe-4S</keyword>
<keyword id="KW-0963">Cytoplasm</keyword>
<keyword id="KW-0408">Iron</keyword>
<keyword id="KW-0411">Iron-sulfur</keyword>
<keyword id="KW-0479">Metal-binding</keyword>
<keyword id="KW-0662">Pyridine nucleotide biosynthesis</keyword>
<keyword id="KW-0808">Transferase</keyword>
<reference key="1">
    <citation type="journal article" date="2010" name="PLoS Genet.">
        <title>Genome sequence of the plant growth promoting endophytic bacterium Enterobacter sp. 638.</title>
        <authorList>
            <person name="Taghavi S."/>
            <person name="van der Lelie D."/>
            <person name="Hoffman A."/>
            <person name="Zhang Y.B."/>
            <person name="Walla M.D."/>
            <person name="Vangronsveld J."/>
            <person name="Newman L."/>
            <person name="Monchy S."/>
        </authorList>
    </citation>
    <scope>NUCLEOTIDE SEQUENCE [LARGE SCALE GENOMIC DNA]</scope>
    <source>
        <strain>638</strain>
    </source>
</reference>
<evidence type="ECO:0000255" key="1">
    <source>
        <dbReference type="HAMAP-Rule" id="MF_00567"/>
    </source>
</evidence>
<accession>A4W892</accession>
<dbReference type="EC" id="2.5.1.72" evidence="1"/>
<dbReference type="EMBL" id="CP000653">
    <property type="protein sequence ID" value="ABP59922.1"/>
    <property type="molecule type" value="Genomic_DNA"/>
</dbReference>
<dbReference type="RefSeq" id="WP_012016641.1">
    <property type="nucleotide sequence ID" value="NC_009436.1"/>
</dbReference>
<dbReference type="SMR" id="A4W892"/>
<dbReference type="STRING" id="399742.Ent638_1241"/>
<dbReference type="KEGG" id="ent:Ent638_1241"/>
<dbReference type="eggNOG" id="COG0379">
    <property type="taxonomic scope" value="Bacteria"/>
</dbReference>
<dbReference type="HOGENOM" id="CLU_047382_1_0_6"/>
<dbReference type="OrthoDB" id="9801204at2"/>
<dbReference type="UniPathway" id="UPA00253">
    <property type="reaction ID" value="UER00327"/>
</dbReference>
<dbReference type="Proteomes" id="UP000000230">
    <property type="component" value="Chromosome"/>
</dbReference>
<dbReference type="GO" id="GO:0005829">
    <property type="term" value="C:cytosol"/>
    <property type="evidence" value="ECO:0007669"/>
    <property type="project" value="TreeGrafter"/>
</dbReference>
<dbReference type="GO" id="GO:0051539">
    <property type="term" value="F:4 iron, 4 sulfur cluster binding"/>
    <property type="evidence" value="ECO:0007669"/>
    <property type="project" value="UniProtKB-KW"/>
</dbReference>
<dbReference type="GO" id="GO:0046872">
    <property type="term" value="F:metal ion binding"/>
    <property type="evidence" value="ECO:0007669"/>
    <property type="project" value="UniProtKB-KW"/>
</dbReference>
<dbReference type="GO" id="GO:0008987">
    <property type="term" value="F:quinolinate synthetase A activity"/>
    <property type="evidence" value="ECO:0007669"/>
    <property type="project" value="UniProtKB-UniRule"/>
</dbReference>
<dbReference type="GO" id="GO:0034628">
    <property type="term" value="P:'de novo' NAD biosynthetic process from L-aspartate"/>
    <property type="evidence" value="ECO:0007669"/>
    <property type="project" value="TreeGrafter"/>
</dbReference>
<dbReference type="FunFam" id="3.40.50.10800:FF:000003">
    <property type="entry name" value="Quinolinate synthase A"/>
    <property type="match status" value="1"/>
</dbReference>
<dbReference type="Gene3D" id="3.40.50.10800">
    <property type="entry name" value="NadA-like"/>
    <property type="match status" value="3"/>
</dbReference>
<dbReference type="HAMAP" id="MF_00567">
    <property type="entry name" value="NadA_type1"/>
    <property type="match status" value="1"/>
</dbReference>
<dbReference type="InterPro" id="IPR003473">
    <property type="entry name" value="NadA"/>
</dbReference>
<dbReference type="InterPro" id="IPR036094">
    <property type="entry name" value="NadA_sf"/>
</dbReference>
<dbReference type="InterPro" id="IPR023513">
    <property type="entry name" value="Quinolinate_synth_A_type1"/>
</dbReference>
<dbReference type="NCBIfam" id="TIGR00550">
    <property type="entry name" value="nadA"/>
    <property type="match status" value="1"/>
</dbReference>
<dbReference type="NCBIfam" id="NF006877">
    <property type="entry name" value="PRK09375.1-1"/>
    <property type="match status" value="1"/>
</dbReference>
<dbReference type="NCBIfam" id="NF006878">
    <property type="entry name" value="PRK09375.1-2"/>
    <property type="match status" value="1"/>
</dbReference>
<dbReference type="PANTHER" id="PTHR30573:SF0">
    <property type="entry name" value="QUINOLINATE SYNTHASE, CHLOROPLASTIC"/>
    <property type="match status" value="1"/>
</dbReference>
<dbReference type="PANTHER" id="PTHR30573">
    <property type="entry name" value="QUINOLINATE SYNTHETASE A"/>
    <property type="match status" value="1"/>
</dbReference>
<dbReference type="Pfam" id="PF02445">
    <property type="entry name" value="NadA"/>
    <property type="match status" value="1"/>
</dbReference>
<dbReference type="SUPFAM" id="SSF142754">
    <property type="entry name" value="NadA-like"/>
    <property type="match status" value="1"/>
</dbReference>
<protein>
    <recommendedName>
        <fullName evidence="1">Quinolinate synthase</fullName>
        <ecNumber evidence="1">2.5.1.72</ecNumber>
    </recommendedName>
</protein>
<organism>
    <name type="scientific">Enterobacter sp. (strain 638)</name>
    <dbReference type="NCBI Taxonomy" id="399742"/>
    <lineage>
        <taxon>Bacteria</taxon>
        <taxon>Pseudomonadati</taxon>
        <taxon>Pseudomonadota</taxon>
        <taxon>Gammaproteobacteria</taxon>
        <taxon>Enterobacterales</taxon>
        <taxon>Enterobacteriaceae</taxon>
        <taxon>Enterobacter</taxon>
    </lineage>
</organism>
<feature type="chain" id="PRO_1000061143" description="Quinolinate synthase">
    <location>
        <begin position="1"/>
        <end position="347"/>
    </location>
</feature>
<feature type="binding site" evidence="1">
    <location>
        <position position="47"/>
    </location>
    <ligand>
        <name>iminosuccinate</name>
        <dbReference type="ChEBI" id="CHEBI:77875"/>
    </ligand>
</feature>
<feature type="binding site" evidence="1">
    <location>
        <position position="68"/>
    </location>
    <ligand>
        <name>iminosuccinate</name>
        <dbReference type="ChEBI" id="CHEBI:77875"/>
    </ligand>
</feature>
<feature type="binding site" evidence="1">
    <location>
        <position position="113"/>
    </location>
    <ligand>
        <name>[4Fe-4S] cluster</name>
        <dbReference type="ChEBI" id="CHEBI:49883"/>
    </ligand>
</feature>
<feature type="binding site" evidence="1">
    <location>
        <begin position="139"/>
        <end position="141"/>
    </location>
    <ligand>
        <name>iminosuccinate</name>
        <dbReference type="ChEBI" id="CHEBI:77875"/>
    </ligand>
</feature>
<feature type="binding site" evidence="1">
    <location>
        <position position="156"/>
    </location>
    <ligand>
        <name>iminosuccinate</name>
        <dbReference type="ChEBI" id="CHEBI:77875"/>
    </ligand>
</feature>
<feature type="binding site" evidence="1">
    <location>
        <position position="200"/>
    </location>
    <ligand>
        <name>[4Fe-4S] cluster</name>
        <dbReference type="ChEBI" id="CHEBI:49883"/>
    </ligand>
</feature>
<feature type="binding site" evidence="1">
    <location>
        <begin position="226"/>
        <end position="228"/>
    </location>
    <ligand>
        <name>iminosuccinate</name>
        <dbReference type="ChEBI" id="CHEBI:77875"/>
    </ligand>
</feature>
<feature type="binding site" evidence="1">
    <location>
        <position position="243"/>
    </location>
    <ligand>
        <name>iminosuccinate</name>
        <dbReference type="ChEBI" id="CHEBI:77875"/>
    </ligand>
</feature>
<feature type="binding site" evidence="1">
    <location>
        <position position="297"/>
    </location>
    <ligand>
        <name>[4Fe-4S] cluster</name>
        <dbReference type="ChEBI" id="CHEBI:49883"/>
    </ligand>
</feature>
<comment type="function">
    <text evidence="1">Catalyzes the condensation of iminoaspartate with dihydroxyacetone phosphate to form quinolinate.</text>
</comment>
<comment type="catalytic activity">
    <reaction evidence="1">
        <text>iminosuccinate + dihydroxyacetone phosphate = quinolinate + phosphate + 2 H2O + H(+)</text>
        <dbReference type="Rhea" id="RHEA:25888"/>
        <dbReference type="ChEBI" id="CHEBI:15377"/>
        <dbReference type="ChEBI" id="CHEBI:15378"/>
        <dbReference type="ChEBI" id="CHEBI:29959"/>
        <dbReference type="ChEBI" id="CHEBI:43474"/>
        <dbReference type="ChEBI" id="CHEBI:57642"/>
        <dbReference type="ChEBI" id="CHEBI:77875"/>
        <dbReference type="EC" id="2.5.1.72"/>
    </reaction>
    <physiologicalReaction direction="left-to-right" evidence="1">
        <dbReference type="Rhea" id="RHEA:25889"/>
    </physiologicalReaction>
</comment>
<comment type="cofactor">
    <cofactor evidence="1">
        <name>[4Fe-4S] cluster</name>
        <dbReference type="ChEBI" id="CHEBI:49883"/>
    </cofactor>
    <text evidence="1">Binds 1 [4Fe-4S] cluster per subunit.</text>
</comment>
<comment type="pathway">
    <text evidence="1">Cofactor biosynthesis; NAD(+) biosynthesis; quinolinate from iminoaspartate: step 1/1.</text>
</comment>
<comment type="subcellular location">
    <subcellularLocation>
        <location evidence="1">Cytoplasm</location>
    </subcellularLocation>
</comment>
<comment type="similarity">
    <text evidence="1">Belongs to the quinolinate synthase family. Type 1 subfamily.</text>
</comment>